<proteinExistence type="inferred from homology"/>
<name>OFUT2_PLABA</name>
<accession>A0A509AKB8</accession>
<evidence type="ECO:0000250" key="1">
    <source>
        <dbReference type="UniProtKB" id="A5K6G1"/>
    </source>
</evidence>
<evidence type="ECO:0000250" key="2">
    <source>
        <dbReference type="UniProtKB" id="Q9Y2G5"/>
    </source>
</evidence>
<evidence type="ECO:0000250" key="3">
    <source>
        <dbReference type="UniProtKB" id="W7K6N5"/>
    </source>
</evidence>
<evidence type="ECO:0000255" key="4"/>
<evidence type="ECO:0000269" key="5">
    <source>
    </source>
</evidence>
<evidence type="ECO:0000303" key="6">
    <source>
    </source>
</evidence>
<evidence type="ECO:0000305" key="7"/>
<evidence type="ECO:0000312" key="8">
    <source>
        <dbReference type="EMBL" id="VUC55262.1"/>
    </source>
</evidence>
<evidence type="ECO:0000312" key="9">
    <source>
        <dbReference type="Proteomes" id="UP000074855"/>
    </source>
</evidence>
<sequence>MKNMIYNLISISLYSLIIILTDIYAKTSSLICNKNDIYLNDKFYFLKKKKYILYDVNIGEGFNLQKEVLYRMSLVIYQLNKRDKEYIYYLVLPPWCYLSHWSNKRHDNLQWNIFLNMNIIKNVIPIIEFSDYKKLYGDVTDFIISFKYLLDSNAQKAKYYHVLPFDKCYIEDYKFKIVCKNCDYKYSVTYSGNCTNIKGKNTLCYSDYIVTNYLVNYVVHKLFYIHNINSILIKNSNVVLVPFPNELFENNIEDILLFNEKLIYNGNNYIKEILKNSNYISCHLRYNDFKKITSYDVPSVQIAILKLLYIMFMNNKEKIFISTDEKKYVQYIINKHFKQFKHFFYFYENKDNYHEGQVAIIEQWICANSSTFVGNIFSRFTMHIIWERYLITKGKEHQNIDLCGYSINNNEQLKNRYKKIQYIYDHSSIEKLNNIYNTYSEIDKKYIITLCFGFPSHFPSNLSIYRKKYIPFA</sequence>
<organism evidence="9">
    <name type="scientific">Plasmodium berghei (strain Anka)</name>
    <dbReference type="NCBI Taxonomy" id="5823"/>
    <lineage>
        <taxon>Eukaryota</taxon>
        <taxon>Sar</taxon>
        <taxon>Alveolata</taxon>
        <taxon>Apicomplexa</taxon>
        <taxon>Aconoidasida</taxon>
        <taxon>Haemosporida</taxon>
        <taxon>Plasmodiidae</taxon>
        <taxon>Plasmodium</taxon>
        <taxon>Plasmodium (Vinckeia)</taxon>
    </lineage>
</organism>
<gene>
    <name evidence="6" type="primary">POFUT2</name>
    <name evidence="8" type="ORF">PBANKA_0810400</name>
</gene>
<protein>
    <recommendedName>
        <fullName evidence="7">GDP-fucose protein O-fucosyltransferase 2</fullName>
        <ecNumber evidence="1">2.4.1.221</ecNumber>
    </recommendedName>
    <alternativeName>
        <fullName evidence="6">Protein O-fucosyltransferase 2</fullName>
    </alternativeName>
</protein>
<feature type="signal peptide" evidence="4">
    <location>
        <begin position="1"/>
        <end position="25"/>
    </location>
</feature>
<feature type="chain" id="PRO_0000455543" description="GDP-fucose protein O-fucosyltransferase 2" evidence="4">
    <location>
        <begin position="26"/>
        <end position="473"/>
    </location>
</feature>
<feature type="active site" description="Proton acceptor" evidence="2">
    <location>
        <position position="60"/>
    </location>
</feature>
<feature type="binding site" evidence="2">
    <location>
        <begin position="59"/>
        <end position="63"/>
    </location>
    <ligand>
        <name>GDP-beta-L-fucose</name>
        <dbReference type="ChEBI" id="CHEBI:57273"/>
    </ligand>
</feature>
<feature type="binding site" evidence="2">
    <location>
        <begin position="283"/>
        <end position="285"/>
    </location>
    <ligand>
        <name>GDP-beta-L-fucose</name>
        <dbReference type="ChEBI" id="CHEBI:57273"/>
    </ligand>
</feature>
<feature type="binding site" evidence="2">
    <location>
        <begin position="379"/>
        <end position="380"/>
    </location>
    <ligand>
        <name>GDP-beta-L-fucose</name>
        <dbReference type="ChEBI" id="CHEBI:57273"/>
    </ligand>
</feature>
<feature type="site" description="Essential for catalytic activity" evidence="2">
    <location>
        <position position="387"/>
    </location>
</feature>
<dbReference type="EC" id="2.4.1.221" evidence="1"/>
<dbReference type="EMBL" id="LK023123">
    <property type="protein sequence ID" value="VUC55262.1"/>
    <property type="molecule type" value="Genomic_DNA"/>
</dbReference>
<dbReference type="SMR" id="A0A509AKB8"/>
<dbReference type="FunCoup" id="A0A509AKB8">
    <property type="interactions" value="51"/>
</dbReference>
<dbReference type="STRING" id="5823.A0A509AKB8"/>
<dbReference type="VEuPathDB" id="PlasmoDB:PBANKA_0810400"/>
<dbReference type="InParanoid" id="A0A509AKB8"/>
<dbReference type="OMA" id="RNAVWPI"/>
<dbReference type="UniPathway" id="UPA00378"/>
<dbReference type="Proteomes" id="UP000074855">
    <property type="component" value="Chromosome 8"/>
</dbReference>
<dbReference type="GO" id="GO:0005783">
    <property type="term" value="C:endoplasmic reticulum"/>
    <property type="evidence" value="ECO:0007669"/>
    <property type="project" value="UniProtKB-SubCell"/>
</dbReference>
<dbReference type="GO" id="GO:0046922">
    <property type="term" value="F:peptide-O-fucosyltransferase activity"/>
    <property type="evidence" value="ECO:0007669"/>
    <property type="project" value="InterPro"/>
</dbReference>
<dbReference type="GO" id="GO:0006004">
    <property type="term" value="P:fucose metabolic process"/>
    <property type="evidence" value="ECO:0007669"/>
    <property type="project" value="UniProtKB-KW"/>
</dbReference>
<dbReference type="CDD" id="cd11298">
    <property type="entry name" value="O-FucT-2"/>
    <property type="match status" value="1"/>
</dbReference>
<dbReference type="Gene3D" id="3.40.50.11340">
    <property type="match status" value="1"/>
</dbReference>
<dbReference type="Gene3D" id="3.40.50.11350">
    <property type="match status" value="1"/>
</dbReference>
<dbReference type="InterPro" id="IPR019378">
    <property type="entry name" value="GDP-Fuc_O-FucTrfase"/>
</dbReference>
<dbReference type="InterPro" id="IPR045130">
    <property type="entry name" value="OFUT2-like"/>
</dbReference>
<dbReference type="PANTHER" id="PTHR13398">
    <property type="entry name" value="GDP-FUCOSE PROTEIN O-FUCOSYLTRANSFERASE 2"/>
    <property type="match status" value="1"/>
</dbReference>
<dbReference type="PANTHER" id="PTHR13398:SF0">
    <property type="entry name" value="GDP-FUCOSE PROTEIN O-FUCOSYLTRANSFERASE 2"/>
    <property type="match status" value="1"/>
</dbReference>
<dbReference type="Pfam" id="PF10250">
    <property type="entry name" value="O-FucT"/>
    <property type="match status" value="1"/>
</dbReference>
<comment type="function">
    <text evidence="1 3 5">Catalyzes the reaction that attaches fucose through an O-glycosidic linkage to a conserved serine or threonine residue in the consensus sequence C1-X-X-S/T-C2 of thrombospondin type I repeats (TSRs) where C1 and C2 are the first and second cysteines of the repeat, respectively (By similarity). O-fucosylates sporozoite proteins CSP and TRAP (By similarity). O-fucosylation regulates stability and intracellular trafficking of TRAP but not of CSP (By similarity). Dispensable for parasite transmission to the mosquito vector and/or infection of the vertebrate host hepatocytes (PubMed:31334132).</text>
</comment>
<comment type="catalytic activity">
    <reaction evidence="1">
        <text>L-seryl-[protein] + GDP-beta-L-fucose = 3-O-(alpha-L-fucosyl)-L-seryl-[protein] + GDP + H(+)</text>
        <dbReference type="Rhea" id="RHEA:63644"/>
        <dbReference type="Rhea" id="RHEA-COMP:9863"/>
        <dbReference type="Rhea" id="RHEA-COMP:17914"/>
        <dbReference type="ChEBI" id="CHEBI:15378"/>
        <dbReference type="ChEBI" id="CHEBI:29999"/>
        <dbReference type="ChEBI" id="CHEBI:57273"/>
        <dbReference type="ChEBI" id="CHEBI:58189"/>
        <dbReference type="ChEBI" id="CHEBI:189632"/>
        <dbReference type="EC" id="2.4.1.221"/>
    </reaction>
    <physiologicalReaction direction="left-to-right" evidence="1">
        <dbReference type="Rhea" id="RHEA:63645"/>
    </physiologicalReaction>
</comment>
<comment type="catalytic activity">
    <reaction evidence="1">
        <text>L-threonyl-[protein] + GDP-beta-L-fucose = 3-O-(alpha-L-fucosyl)-L-threonyl-[protein] + GDP + H(+)</text>
        <dbReference type="Rhea" id="RHEA:70491"/>
        <dbReference type="Rhea" id="RHEA-COMP:11060"/>
        <dbReference type="Rhea" id="RHEA-COMP:17915"/>
        <dbReference type="ChEBI" id="CHEBI:15378"/>
        <dbReference type="ChEBI" id="CHEBI:30013"/>
        <dbReference type="ChEBI" id="CHEBI:57273"/>
        <dbReference type="ChEBI" id="CHEBI:58189"/>
        <dbReference type="ChEBI" id="CHEBI:189631"/>
        <dbReference type="EC" id="2.4.1.221"/>
    </reaction>
    <physiologicalReaction direction="left-to-right" evidence="1">
        <dbReference type="Rhea" id="RHEA:70492"/>
    </physiologicalReaction>
</comment>
<comment type="pathway">
    <text evidence="1">Protein modification; protein glycosylation.</text>
</comment>
<comment type="subcellular location">
    <subcellularLocation>
        <location evidence="3">Endoplasmic reticulum</location>
    </subcellularLocation>
</comment>
<comment type="disruption phenotype">
    <text evidence="5">In S.stephensi mosquito vector, number of oocysts in the midgut, number of sporozoites in the salivary glands, and sporozoite gliding motility are normal (PubMed:31334132). Infection of mouse host is normal including invasion of hepatocytes and infection of erythrocytes (PubMed:31334132).</text>
</comment>
<comment type="similarity">
    <text evidence="7">Belongs to the glycosyltransferase 68 family.</text>
</comment>
<keyword id="KW-0119">Carbohydrate metabolism</keyword>
<keyword id="KW-0256">Endoplasmic reticulum</keyword>
<keyword id="KW-0294">Fucose metabolism</keyword>
<keyword id="KW-0328">Glycosyltransferase</keyword>
<keyword id="KW-1185">Reference proteome</keyword>
<keyword id="KW-0732">Signal</keyword>
<keyword id="KW-0808">Transferase</keyword>
<reference evidence="9" key="1">
    <citation type="journal article" date="2014" name="BMC Biol.">
        <title>A comprehensive evaluation of rodent malaria parasite genomes and gene expression.</title>
        <authorList>
            <person name="Otto T.D."/>
            <person name="Bohme U."/>
            <person name="Jackson A.P."/>
            <person name="Hunt M."/>
            <person name="Franke-Fayard B."/>
            <person name="Hoeijmakers W.A."/>
            <person name="Religa A.A."/>
            <person name="Robertson L."/>
            <person name="Sanders M."/>
            <person name="Ogun S.A."/>
            <person name="Cunningham D."/>
            <person name="Erhart A."/>
            <person name="Billker O."/>
            <person name="Khan S.M."/>
            <person name="Stunnenberg H.G."/>
            <person name="Langhorne J."/>
            <person name="Holder A.A."/>
            <person name="Waters A.P."/>
            <person name="Newbold C.I."/>
            <person name="Pain A."/>
            <person name="Berriman M."/>
            <person name="Janse C.J."/>
        </authorList>
    </citation>
    <scope>NUCLEOTIDE SEQUENCE [LARGE SCALE GENOMIC DNA]</scope>
    <source>
        <strain evidence="9">ANKA</strain>
    </source>
</reference>
<reference evidence="7" key="2">
    <citation type="journal article" date="2019" name="Front. Cell. Infect. Microbiol.">
        <title>Protein O-Fucosyltransferase 2 Is Not Essential for Plasmodium berghei Development.</title>
        <authorList>
            <person name="Sanz S."/>
            <person name="Aquilini E."/>
            <person name="Tweedell R.E."/>
            <person name="Verma G."/>
            <person name="Hamerly T."/>
            <person name="Hritzo B."/>
            <person name="Tripathi A."/>
            <person name="Machado M."/>
            <person name="Churcher T.S."/>
            <person name="Rodrigues J.A."/>
            <person name="Izquierdo L."/>
            <person name="Dinglasan R.R."/>
        </authorList>
    </citation>
    <scope>FUNCTION</scope>
    <scope>DISRUPTION PHENOTYPE</scope>
</reference>